<reference key="1">
    <citation type="submission" date="2002-12" db="EMBL/GenBank/DDBJ databases">
        <authorList>
            <consortium name="NIH - Xenopus Gene Collection (XGC) project"/>
        </authorList>
    </citation>
    <scope>NUCLEOTIDE SEQUENCE [LARGE SCALE MRNA]</scope>
    <source>
        <tissue>Embryo</tissue>
    </source>
</reference>
<protein>
    <recommendedName>
        <fullName evidence="1">Eukaryotic translation initiation factor 3 subunit M</fullName>
        <shortName evidence="1">eIF3m</shortName>
    </recommendedName>
</protein>
<feature type="chain" id="PRO_0000308200" description="Eukaryotic translation initiation factor 3 subunit M">
    <location>
        <begin position="1"/>
        <end position="374"/>
    </location>
</feature>
<feature type="domain" description="PCI" evidence="2">
    <location>
        <begin position="180"/>
        <end position="339"/>
    </location>
</feature>
<accession>Q7ZYU8</accession>
<comment type="function">
    <text evidence="1">Component of the eukaryotic translation initiation factor 3 (eIF-3) complex, which is involved in protein synthesis of a specialized repertoire of mRNAs and, together with other initiation factors, stimulates binding of mRNA and methionyl-tRNAi to the 40S ribosome. The eIF-3 complex specifically targets and initiates translation of a subset of mRNAs involved in cell proliferation.</text>
</comment>
<comment type="subunit">
    <text evidence="1">Component of the eukaryotic translation initiation factor 3 (eIF-3) complex, which is composed of 13 subunits: eif3a, eif3b, eif3c, eif3d, eif3e, eif3f, eif3g, eif3h, eif3i, eif3j, eif3k, eif3l and eif3m.</text>
</comment>
<comment type="subcellular location">
    <subcellularLocation>
        <location evidence="1">Cytoplasm</location>
    </subcellularLocation>
</comment>
<comment type="similarity">
    <text evidence="1">Belongs to the eIF-3 subunit M family.</text>
</comment>
<keyword id="KW-0963">Cytoplasm</keyword>
<keyword id="KW-0396">Initiation factor</keyword>
<keyword id="KW-0648">Protein biosynthesis</keyword>
<keyword id="KW-1185">Reference proteome</keyword>
<proteinExistence type="evidence at transcript level"/>
<dbReference type="EMBL" id="BC041198">
    <property type="protein sequence ID" value="AAH41198.1"/>
    <property type="molecule type" value="mRNA"/>
</dbReference>
<dbReference type="SMR" id="Q7ZYU8"/>
<dbReference type="BioGRID" id="97995">
    <property type="interactions" value="3"/>
</dbReference>
<dbReference type="IntAct" id="Q7ZYU8">
    <property type="interactions" value="1"/>
</dbReference>
<dbReference type="DNASU" id="379753"/>
<dbReference type="KEGG" id="xla:379753"/>
<dbReference type="AGR" id="Xenbase:XB-GENE-968611"/>
<dbReference type="CTD" id="379753"/>
<dbReference type="Xenbase" id="XB-GENE-968611">
    <property type="gene designation" value="eif3m.S"/>
</dbReference>
<dbReference type="OMA" id="FNDEHKG"/>
<dbReference type="OrthoDB" id="10267031at2759"/>
<dbReference type="Proteomes" id="UP000186698">
    <property type="component" value="Chromosome 4S"/>
</dbReference>
<dbReference type="Bgee" id="379753">
    <property type="expression patterns" value="Expressed in spleen and 19 other cell types or tissues"/>
</dbReference>
<dbReference type="GO" id="GO:0016282">
    <property type="term" value="C:eukaryotic 43S preinitiation complex"/>
    <property type="evidence" value="ECO:0007669"/>
    <property type="project" value="UniProtKB-UniRule"/>
</dbReference>
<dbReference type="GO" id="GO:0033290">
    <property type="term" value="C:eukaryotic 48S preinitiation complex"/>
    <property type="evidence" value="ECO:0007669"/>
    <property type="project" value="UniProtKB-UniRule"/>
</dbReference>
<dbReference type="GO" id="GO:0005852">
    <property type="term" value="C:eukaryotic translation initiation factor 3 complex"/>
    <property type="evidence" value="ECO:0000318"/>
    <property type="project" value="GO_Central"/>
</dbReference>
<dbReference type="GO" id="GO:0071541">
    <property type="term" value="C:eukaryotic translation initiation factor 3 complex, eIF3m"/>
    <property type="evidence" value="ECO:0007669"/>
    <property type="project" value="UniProtKB-UniRule"/>
</dbReference>
<dbReference type="GO" id="GO:0003743">
    <property type="term" value="F:translation initiation factor activity"/>
    <property type="evidence" value="ECO:0007669"/>
    <property type="project" value="UniProtKB-UniRule"/>
</dbReference>
<dbReference type="GO" id="GO:0002183">
    <property type="term" value="P:cytoplasmic translational initiation"/>
    <property type="evidence" value="ECO:0000318"/>
    <property type="project" value="GO_Central"/>
</dbReference>
<dbReference type="GO" id="GO:0001732">
    <property type="term" value="P:formation of cytoplasmic translation initiation complex"/>
    <property type="evidence" value="ECO:0007669"/>
    <property type="project" value="UniProtKB-UniRule"/>
</dbReference>
<dbReference type="HAMAP" id="MF_03012">
    <property type="entry name" value="eIF3m"/>
    <property type="match status" value="1"/>
</dbReference>
<dbReference type="InterPro" id="IPR016024">
    <property type="entry name" value="ARM-type_fold"/>
</dbReference>
<dbReference type="InterPro" id="IPR045237">
    <property type="entry name" value="COPS7/eIF3m"/>
</dbReference>
<dbReference type="InterPro" id="IPR027528">
    <property type="entry name" value="eIF3m"/>
</dbReference>
<dbReference type="InterPro" id="IPR040750">
    <property type="entry name" value="eIF3m_C_helix"/>
</dbReference>
<dbReference type="InterPro" id="IPR000717">
    <property type="entry name" value="PCI_dom"/>
</dbReference>
<dbReference type="InterPro" id="IPR036390">
    <property type="entry name" value="WH_DNA-bd_sf"/>
</dbReference>
<dbReference type="PANTHER" id="PTHR15350">
    <property type="entry name" value="COP9 SIGNALOSOME COMPLEX SUBUNIT 7/DENDRITIC CELL PROTEIN GA17"/>
    <property type="match status" value="1"/>
</dbReference>
<dbReference type="PANTHER" id="PTHR15350:SF2">
    <property type="entry name" value="EUKARYOTIC TRANSLATION INITIATION FACTOR 3 SUBUNIT M"/>
    <property type="match status" value="1"/>
</dbReference>
<dbReference type="Pfam" id="PF18005">
    <property type="entry name" value="eIF3m_C_helix"/>
    <property type="match status" value="1"/>
</dbReference>
<dbReference type="Pfam" id="PF01399">
    <property type="entry name" value="PCI"/>
    <property type="match status" value="1"/>
</dbReference>
<dbReference type="SMART" id="SM00088">
    <property type="entry name" value="PINT"/>
    <property type="match status" value="1"/>
</dbReference>
<dbReference type="SUPFAM" id="SSF48371">
    <property type="entry name" value="ARM repeat"/>
    <property type="match status" value="1"/>
</dbReference>
<dbReference type="SUPFAM" id="SSF46785">
    <property type="entry name" value="Winged helix' DNA-binding domain"/>
    <property type="match status" value="1"/>
</dbReference>
<dbReference type="PROSITE" id="PS50250">
    <property type="entry name" value="PCI"/>
    <property type="match status" value="1"/>
</dbReference>
<name>EIF3M_XENLA</name>
<evidence type="ECO:0000255" key="1">
    <source>
        <dbReference type="HAMAP-Rule" id="MF_03012"/>
    </source>
</evidence>
<evidence type="ECO:0000255" key="2">
    <source>
        <dbReference type="PROSITE-ProRule" id="PRU01185"/>
    </source>
</evidence>
<sequence length="374" mass="42306">MSVPAFIDVTEEDQAAELRAYLKSKGAEISEENSEGGLHIDLAQIIEACDVCLKDDDKDVESSMNSVVSLVLILETDKQEALIESLCEKLVKSREGERPSLRLQLLSNLFHGMDKSIPARYTVYCALIKVAATCGGIVYIPTDLDQVRKWISDWNLSTEKKHVVLRLLYEALVDCKKSDEAAKVMVELLGSYTDDNASQARLDAHKCIVRALKDPKAFLLDHLLALKPVKFLEGELIHDLLTIFVSAKLSSYVKFYQNNKDFIDSLGLSHEQNMEKMRLLTFMGMAVDNKEISFDTIQQELQMGADEVEAFIIDAVKTKMVYCKIDQTQKKVVVSHSTHRTFGKQQWQQLYDILNTWKLNLNKVKNSLYSISDA</sequence>
<gene>
    <name type="primary">eif3m</name>
</gene>
<organism>
    <name type="scientific">Xenopus laevis</name>
    <name type="common">African clawed frog</name>
    <dbReference type="NCBI Taxonomy" id="8355"/>
    <lineage>
        <taxon>Eukaryota</taxon>
        <taxon>Metazoa</taxon>
        <taxon>Chordata</taxon>
        <taxon>Craniata</taxon>
        <taxon>Vertebrata</taxon>
        <taxon>Euteleostomi</taxon>
        <taxon>Amphibia</taxon>
        <taxon>Batrachia</taxon>
        <taxon>Anura</taxon>
        <taxon>Pipoidea</taxon>
        <taxon>Pipidae</taxon>
        <taxon>Xenopodinae</taxon>
        <taxon>Xenopus</taxon>
        <taxon>Xenopus</taxon>
    </lineage>
</organism>